<feature type="chain" id="PRO_0000134860" description="Riboflavin synthase">
    <location>
        <begin position="1"/>
        <end position="156"/>
    </location>
</feature>
<feature type="strand" evidence="3">
    <location>
        <begin position="4"/>
        <end position="12"/>
    </location>
</feature>
<feature type="helix" evidence="3">
    <location>
        <begin position="18"/>
        <end position="28"/>
    </location>
</feature>
<feature type="strand" evidence="3">
    <location>
        <begin position="33"/>
        <end position="41"/>
    </location>
</feature>
<feature type="helix" evidence="3">
    <location>
        <begin position="42"/>
        <end position="44"/>
    </location>
</feature>
<feature type="helix" evidence="3">
    <location>
        <begin position="45"/>
        <end position="55"/>
    </location>
</feature>
<feature type="strand" evidence="3">
    <location>
        <begin position="59"/>
        <end position="65"/>
    </location>
</feature>
<feature type="helix" evidence="3">
    <location>
        <begin position="71"/>
        <end position="91"/>
    </location>
</feature>
<feature type="strand" evidence="3">
    <location>
        <begin position="95"/>
        <end position="99"/>
    </location>
</feature>
<feature type="helix" evidence="3">
    <location>
        <begin position="102"/>
        <end position="104"/>
    </location>
</feature>
<feature type="strand" evidence="3">
    <location>
        <begin position="105"/>
        <end position="107"/>
    </location>
</feature>
<feature type="helix" evidence="3">
    <location>
        <begin position="108"/>
        <end position="131"/>
    </location>
</feature>
<feature type="helix" evidence="3">
    <location>
        <begin position="133"/>
        <end position="138"/>
    </location>
</feature>
<feature type="turn" evidence="3">
    <location>
        <begin position="139"/>
        <end position="141"/>
    </location>
</feature>
<feature type="strand" evidence="2">
    <location>
        <begin position="146"/>
        <end position="148"/>
    </location>
</feature>
<protein>
    <recommendedName>
        <fullName>Riboflavin synthase</fullName>
        <ecNumber>2.5.1.9</ecNumber>
    </recommendedName>
</protein>
<gene>
    <name type="primary">ribC</name>
    <name type="ordered locus">MJ1184</name>
</gene>
<proteinExistence type="evidence at protein level"/>
<name>RISC_METJA</name>
<sequence>MTKKVGIVDTTFARVDMASIAIKKLKELSPNIKIIRKTVPGIKDLPVACKKLLEEEGCDIVMALGMPGKAEKDKVCAHEASLGLMLAQLMTNKHIIEVFVHEDEAKDDKELDWLAKRRAEEHAENVYYLLFKPEYLTRMAGKGLRQGFEDAGPARE</sequence>
<comment type="catalytic activity">
    <reaction>
        <text>2 6,7-dimethyl-8-(1-D-ribityl)lumazine + H(+) = 5-amino-6-(D-ribitylamino)uracil + riboflavin</text>
        <dbReference type="Rhea" id="RHEA:20772"/>
        <dbReference type="ChEBI" id="CHEBI:15378"/>
        <dbReference type="ChEBI" id="CHEBI:15934"/>
        <dbReference type="ChEBI" id="CHEBI:57986"/>
        <dbReference type="ChEBI" id="CHEBI:58201"/>
        <dbReference type="EC" id="2.5.1.9"/>
    </reaction>
</comment>
<comment type="pathway">
    <text>Cofactor biosynthesis; riboflavin biosynthesis; riboflavin from 2-hydroxy-3-oxobutyl phosphate and 5-amino-6-(D-ribitylamino)uracil: step 2/2.</text>
</comment>
<comment type="similarity">
    <text evidence="1">Belongs to the DMRL synthase family.</text>
</comment>
<evidence type="ECO:0000305" key="1"/>
<evidence type="ECO:0007829" key="2">
    <source>
        <dbReference type="PDB" id="2B98"/>
    </source>
</evidence>
<evidence type="ECO:0007829" key="3">
    <source>
        <dbReference type="PDB" id="2B99"/>
    </source>
</evidence>
<reference key="1">
    <citation type="journal article" date="1996" name="Science">
        <title>Complete genome sequence of the methanogenic archaeon, Methanococcus jannaschii.</title>
        <authorList>
            <person name="Bult C.J."/>
            <person name="White O."/>
            <person name="Olsen G.J."/>
            <person name="Zhou L."/>
            <person name="Fleischmann R.D."/>
            <person name="Sutton G.G."/>
            <person name="Blake J.A."/>
            <person name="FitzGerald L.M."/>
            <person name="Clayton R.A."/>
            <person name="Gocayne J.D."/>
            <person name="Kerlavage A.R."/>
            <person name="Dougherty B.A."/>
            <person name="Tomb J.-F."/>
            <person name="Adams M.D."/>
            <person name="Reich C.I."/>
            <person name="Overbeek R."/>
            <person name="Kirkness E.F."/>
            <person name="Weinstock K.G."/>
            <person name="Merrick J.M."/>
            <person name="Glodek A."/>
            <person name="Scott J.L."/>
            <person name="Geoghagen N.S.M."/>
            <person name="Weidman J.F."/>
            <person name="Fuhrmann J.L."/>
            <person name="Nguyen D."/>
            <person name="Utterback T.R."/>
            <person name="Kelley J.M."/>
            <person name="Peterson J.D."/>
            <person name="Sadow P.W."/>
            <person name="Hanna M.C."/>
            <person name="Cotton M.D."/>
            <person name="Roberts K.M."/>
            <person name="Hurst M.A."/>
            <person name="Kaine B.P."/>
            <person name="Borodovsky M."/>
            <person name="Klenk H.-P."/>
            <person name="Fraser C.M."/>
            <person name="Smith H.O."/>
            <person name="Woese C.R."/>
            <person name="Venter J.C."/>
        </authorList>
    </citation>
    <scope>NUCLEOTIDE SEQUENCE [LARGE SCALE GENOMIC DNA]</scope>
    <source>
        <strain>ATCC 43067 / DSM 2661 / JAL-1 / JCM 10045 / NBRC 100440</strain>
    </source>
</reference>
<dbReference type="EC" id="2.5.1.9"/>
<dbReference type="EMBL" id="L77117">
    <property type="protein sequence ID" value="AAB99185.1"/>
    <property type="molecule type" value="Genomic_DNA"/>
</dbReference>
<dbReference type="PIR" id="G64447">
    <property type="entry name" value="G64447"/>
</dbReference>
<dbReference type="RefSeq" id="WP_010870697.1">
    <property type="nucleotide sequence ID" value="NC_000909.1"/>
</dbReference>
<dbReference type="PDB" id="2B98">
    <property type="method" value="X-ray"/>
    <property type="resolution" value="2.30 A"/>
    <property type="chains" value="A/B/C/D/E=1-156"/>
</dbReference>
<dbReference type="PDB" id="2B99">
    <property type="method" value="X-ray"/>
    <property type="resolution" value="2.22 A"/>
    <property type="chains" value="A/B/C/D/E=1-156"/>
</dbReference>
<dbReference type="PDB" id="4Y7J">
    <property type="method" value="X-ray"/>
    <property type="resolution" value="4.10 A"/>
    <property type="chains" value="A/B/C/D/E=1-156"/>
</dbReference>
<dbReference type="PDB" id="4Y7K">
    <property type="method" value="X-ray"/>
    <property type="resolution" value="3.50 A"/>
    <property type="chains" value="A/B/C/D/E=2-156"/>
</dbReference>
<dbReference type="PDB" id="5IM5">
    <property type="method" value="X-ray"/>
    <property type="resolution" value="3.70 A"/>
    <property type="chains" value="A/B/C/D/E/F/G/H/I/J/K/M/O/Q/S=1-156"/>
</dbReference>
<dbReference type="PDBsum" id="2B98"/>
<dbReference type="PDBsum" id="2B99"/>
<dbReference type="PDBsum" id="4Y7J"/>
<dbReference type="PDBsum" id="4Y7K"/>
<dbReference type="PDBsum" id="5IM5"/>
<dbReference type="SMR" id="Q58584"/>
<dbReference type="FunCoup" id="Q58584">
    <property type="interactions" value="115"/>
</dbReference>
<dbReference type="STRING" id="243232.MJ_1184"/>
<dbReference type="PaxDb" id="243232-MJ_1184"/>
<dbReference type="EnsemblBacteria" id="AAB99185">
    <property type="protein sequence ID" value="AAB99185"/>
    <property type="gene ID" value="MJ_1184"/>
</dbReference>
<dbReference type="GeneID" id="1452082"/>
<dbReference type="KEGG" id="mja:MJ_1184"/>
<dbReference type="eggNOG" id="arCOG01322">
    <property type="taxonomic scope" value="Archaea"/>
</dbReference>
<dbReference type="HOGENOM" id="CLU_1682776_0_0_2"/>
<dbReference type="InParanoid" id="Q58584"/>
<dbReference type="OrthoDB" id="23911at2157"/>
<dbReference type="PhylomeDB" id="Q58584"/>
<dbReference type="BioCyc" id="MetaCyc:MONOMER-14602"/>
<dbReference type="BRENDA" id="2.5.1.9">
    <property type="organism ID" value="3260"/>
</dbReference>
<dbReference type="UniPathway" id="UPA00275">
    <property type="reaction ID" value="UER00405"/>
</dbReference>
<dbReference type="EvolutionaryTrace" id="Q58584"/>
<dbReference type="Proteomes" id="UP000000805">
    <property type="component" value="Chromosome"/>
</dbReference>
<dbReference type="GO" id="GO:0009349">
    <property type="term" value="C:riboflavin synthase complex"/>
    <property type="evidence" value="ECO:0007669"/>
    <property type="project" value="InterPro"/>
</dbReference>
<dbReference type="GO" id="GO:0004746">
    <property type="term" value="F:riboflavin synthase activity"/>
    <property type="evidence" value="ECO:0007669"/>
    <property type="project" value="UniProtKB-EC"/>
</dbReference>
<dbReference type="GO" id="GO:0009231">
    <property type="term" value="P:riboflavin biosynthetic process"/>
    <property type="evidence" value="ECO:0007669"/>
    <property type="project" value="UniProtKB-UniPathway"/>
</dbReference>
<dbReference type="CDD" id="cd09210">
    <property type="entry name" value="Riboflavin_synthase_archaeal"/>
    <property type="match status" value="1"/>
</dbReference>
<dbReference type="Gene3D" id="3.40.50.960">
    <property type="entry name" value="Lumazine/riboflavin synthase"/>
    <property type="match status" value="1"/>
</dbReference>
<dbReference type="InterPro" id="IPR002180">
    <property type="entry name" value="LS/RS"/>
</dbReference>
<dbReference type="InterPro" id="IPR036467">
    <property type="entry name" value="LS/RS_sf"/>
</dbReference>
<dbReference type="InterPro" id="IPR006399">
    <property type="entry name" value="Ribfl_synth_arc"/>
</dbReference>
<dbReference type="NCBIfam" id="TIGR01506">
    <property type="entry name" value="ribC_arch"/>
    <property type="match status" value="1"/>
</dbReference>
<dbReference type="Pfam" id="PF00885">
    <property type="entry name" value="DMRL_synthase"/>
    <property type="match status" value="1"/>
</dbReference>
<dbReference type="PIRSF" id="PIRSF015750">
    <property type="entry name" value="Ribfl_synth_arc"/>
    <property type="match status" value="1"/>
</dbReference>
<dbReference type="SUPFAM" id="SSF52121">
    <property type="entry name" value="Lumazine synthase"/>
    <property type="match status" value="1"/>
</dbReference>
<organism>
    <name type="scientific">Methanocaldococcus jannaschii (strain ATCC 43067 / DSM 2661 / JAL-1 / JCM 10045 / NBRC 100440)</name>
    <name type="common">Methanococcus jannaschii</name>
    <dbReference type="NCBI Taxonomy" id="243232"/>
    <lineage>
        <taxon>Archaea</taxon>
        <taxon>Methanobacteriati</taxon>
        <taxon>Methanobacteriota</taxon>
        <taxon>Methanomada group</taxon>
        <taxon>Methanococci</taxon>
        <taxon>Methanococcales</taxon>
        <taxon>Methanocaldococcaceae</taxon>
        <taxon>Methanocaldococcus</taxon>
    </lineage>
</organism>
<keyword id="KW-0002">3D-structure</keyword>
<keyword id="KW-1185">Reference proteome</keyword>
<keyword id="KW-0686">Riboflavin biosynthesis</keyword>
<keyword id="KW-0808">Transferase</keyword>
<accession>Q58584</accession>